<organism>
    <name type="scientific">Vibrio cholerae serotype O1 (strain ATCC 39541 / Classical Ogawa 395 / O395)</name>
    <dbReference type="NCBI Taxonomy" id="345073"/>
    <lineage>
        <taxon>Bacteria</taxon>
        <taxon>Pseudomonadati</taxon>
        <taxon>Pseudomonadota</taxon>
        <taxon>Gammaproteobacteria</taxon>
        <taxon>Vibrionales</taxon>
        <taxon>Vibrionaceae</taxon>
        <taxon>Vibrio</taxon>
    </lineage>
</organism>
<keyword id="KW-0378">Hydrolase</keyword>
<keyword id="KW-0596">Phosphopantetheine</keyword>
<keyword id="KW-0597">Phosphoprotein</keyword>
<dbReference type="EC" id="3.3.2.1"/>
<dbReference type="EMBL" id="AF287252">
    <property type="protein sequence ID" value="AAG00563.1"/>
    <property type="molecule type" value="Genomic_DNA"/>
</dbReference>
<dbReference type="EMBL" id="CP000627">
    <property type="protein sequence ID" value="ABQ20715.1"/>
    <property type="molecule type" value="Genomic_DNA"/>
</dbReference>
<dbReference type="EMBL" id="CP001235">
    <property type="protein sequence ID" value="ACP08805.1"/>
    <property type="molecule type" value="Genomic_DNA"/>
</dbReference>
<dbReference type="RefSeq" id="WP_000997093.1">
    <property type="nucleotide sequence ID" value="NZ_JAACZH010000017.1"/>
</dbReference>
<dbReference type="SMR" id="A5F3F4"/>
<dbReference type="KEGG" id="vco:VC0395_A0300"/>
<dbReference type="KEGG" id="vcr:VC395_0788"/>
<dbReference type="PATRIC" id="fig|345073.21.peg.762"/>
<dbReference type="eggNOG" id="COG1535">
    <property type="taxonomic scope" value="Bacteria"/>
</dbReference>
<dbReference type="eggNOG" id="COG3433">
    <property type="taxonomic scope" value="Bacteria"/>
</dbReference>
<dbReference type="HOGENOM" id="CLU_068979_2_0_6"/>
<dbReference type="OrthoDB" id="5794853at2"/>
<dbReference type="UniPathway" id="UPA00022"/>
<dbReference type="Proteomes" id="UP000000249">
    <property type="component" value="Chromosome 2"/>
</dbReference>
<dbReference type="GO" id="GO:0008908">
    <property type="term" value="F:isochorismatase activity"/>
    <property type="evidence" value="ECO:0007669"/>
    <property type="project" value="UniProtKB-EC"/>
</dbReference>
<dbReference type="GO" id="GO:0019537">
    <property type="term" value="P:vibriobactin biosynthetic process"/>
    <property type="evidence" value="ECO:0007669"/>
    <property type="project" value="UniProtKB-UniPathway"/>
</dbReference>
<dbReference type="CDD" id="cd01013">
    <property type="entry name" value="isochorismatase"/>
    <property type="match status" value="1"/>
</dbReference>
<dbReference type="Gene3D" id="1.10.1200.10">
    <property type="entry name" value="ACP-like"/>
    <property type="match status" value="1"/>
</dbReference>
<dbReference type="Gene3D" id="3.40.50.850">
    <property type="entry name" value="Isochorismatase-like"/>
    <property type="match status" value="1"/>
</dbReference>
<dbReference type="InterPro" id="IPR036736">
    <property type="entry name" value="ACP-like_sf"/>
</dbReference>
<dbReference type="InterPro" id="IPR016291">
    <property type="entry name" value="Isochorismatase"/>
</dbReference>
<dbReference type="InterPro" id="IPR000868">
    <property type="entry name" value="Isochorismatase-like_dom"/>
</dbReference>
<dbReference type="InterPro" id="IPR050272">
    <property type="entry name" value="Isochorismatase-like_hydrls"/>
</dbReference>
<dbReference type="InterPro" id="IPR036380">
    <property type="entry name" value="Isochorismatase-like_sf"/>
</dbReference>
<dbReference type="InterPro" id="IPR009081">
    <property type="entry name" value="PP-bd_ACP"/>
</dbReference>
<dbReference type="PANTHER" id="PTHR43540:SF3">
    <property type="entry name" value="ENTEROBACTIN SYNTHASE COMPONENT B"/>
    <property type="match status" value="1"/>
</dbReference>
<dbReference type="PANTHER" id="PTHR43540">
    <property type="entry name" value="PEROXYUREIDOACRYLATE/UREIDOACRYLATE AMIDOHYDROLASE-RELATED"/>
    <property type="match status" value="1"/>
</dbReference>
<dbReference type="Pfam" id="PF00857">
    <property type="entry name" value="Isochorismatase"/>
    <property type="match status" value="1"/>
</dbReference>
<dbReference type="Pfam" id="PF00550">
    <property type="entry name" value="PP-binding"/>
    <property type="match status" value="1"/>
</dbReference>
<dbReference type="PIRSF" id="PIRSF001111">
    <property type="entry name" value="Isochorismatase"/>
    <property type="match status" value="1"/>
</dbReference>
<dbReference type="PRINTS" id="PR01398">
    <property type="entry name" value="ISCHRISMTASE"/>
</dbReference>
<dbReference type="SUPFAM" id="SSF47336">
    <property type="entry name" value="ACP-like"/>
    <property type="match status" value="1"/>
</dbReference>
<dbReference type="SUPFAM" id="SSF52499">
    <property type="entry name" value="Isochorismatase-like hydrolases"/>
    <property type="match status" value="1"/>
</dbReference>
<dbReference type="PROSITE" id="PS50075">
    <property type="entry name" value="CARRIER"/>
    <property type="match status" value="1"/>
</dbReference>
<accession>A5F3F4</accession>
<accession>C3LYD9</accession>
<accession>O07900</accession>
<accession>Q9JQ11</accession>
<reference key="1">
    <citation type="journal article" date="2000" name="Biochemistry">
        <title>Vibriobactin biosynthesis in Vibrio cholerae: VibH is an amide synthase homologous to nonribosomal peptide synthetase condensation domains.</title>
        <authorList>
            <person name="Keating T.A."/>
            <person name="Marshall C.G."/>
            <person name="Walsh C.T."/>
        </authorList>
    </citation>
    <scope>NUCLEOTIDE SEQUENCE [GENOMIC DNA]</scope>
</reference>
<reference key="2">
    <citation type="submission" date="2007-03" db="EMBL/GenBank/DDBJ databases">
        <authorList>
            <person name="Heidelberg J."/>
        </authorList>
    </citation>
    <scope>NUCLEOTIDE SEQUENCE [LARGE SCALE GENOMIC DNA]</scope>
    <source>
        <strain>ATCC 39541 / Classical Ogawa 395 / O395</strain>
    </source>
</reference>
<reference key="3">
    <citation type="journal article" date="2008" name="PLoS ONE">
        <title>A recalibrated molecular clock and independent origins for the cholera pandemic clones.</title>
        <authorList>
            <person name="Feng L."/>
            <person name="Reeves P.R."/>
            <person name="Lan R."/>
            <person name="Ren Y."/>
            <person name="Gao C."/>
            <person name="Zhou Z."/>
            <person name="Ren Y."/>
            <person name="Cheng J."/>
            <person name="Wang W."/>
            <person name="Wang J."/>
            <person name="Qian W."/>
            <person name="Li D."/>
            <person name="Wang L."/>
        </authorList>
    </citation>
    <scope>NUCLEOTIDE SEQUENCE [LARGE SCALE GENOMIC DNA]</scope>
    <source>
        <strain>ATCC 39541 / Classical Ogawa 395 / O395</strain>
    </source>
</reference>
<protein>
    <recommendedName>
        <fullName>Vibriobactin-specific isochorismatase</fullName>
        <ecNumber>3.3.2.1</ecNumber>
    </recommendedName>
    <alternativeName>
        <fullName>2,3 dihydro-2,3 dihydroxybenzoate synthase</fullName>
    </alternativeName>
    <alternativeName>
        <fullName>Isochorismate lyase-ArCP</fullName>
    </alternativeName>
</protein>
<proteinExistence type="inferred from homology"/>
<sequence>MAIPKIASYPLPVSLPTNKVDWRIDASRAVLLIHDMQEYFVHYFDSQAEPIPSLIKHIQQLKAHAKQAGIPVVYTAQPANQDPAERALLSDFWGPGLSEETAIIAPLAPESGDVQLTKWRYSAFKKSPLLDWLRETGRDQLIITGVYAHIGILSTALDAFMFDIQPFVIGDGVADFSLSDHEFSLRYISGRTGAVKSTQQACLEIAAQHSKLTGLSLRTMQHDVAAALNLSVDEVDVQENLLFLGLDSIRAIQLLEKWKAQGADISFAQLMEHVTLQQWWQTIQANLHQPCSA</sequence>
<name>VIBB_VIBC3</name>
<comment type="function">
    <text evidence="1">Involved in the biosynthesis of the catechol siderophore vibriobactin. Vibriobactin is a chelating compound involved in transporting iron from the bacterial environment into the cell cytoplasm (By similarity).</text>
</comment>
<comment type="catalytic activity">
    <reaction>
        <text>isochorismate + H2O = (2S,3S)-2,3-dihydroxy-2,3-dihydrobenzoate + pyruvate</text>
        <dbReference type="Rhea" id="RHEA:11112"/>
        <dbReference type="ChEBI" id="CHEBI:15361"/>
        <dbReference type="ChEBI" id="CHEBI:15377"/>
        <dbReference type="ChEBI" id="CHEBI:29780"/>
        <dbReference type="ChEBI" id="CHEBI:58764"/>
        <dbReference type="EC" id="3.3.2.1"/>
    </reaction>
</comment>
<comment type="cofactor">
    <cofactor evidence="1">
        <name>pantetheine 4'-phosphate</name>
        <dbReference type="ChEBI" id="CHEBI:47942"/>
    </cofactor>
    <text evidence="1">Binds 1 phosphopantetheine covalently.</text>
</comment>
<comment type="pathway">
    <text>Siderophore biosynthesis; vibriobactin biosynthesis.</text>
</comment>
<comment type="similarity">
    <text evidence="3">Belongs to the isochorismatase family.</text>
</comment>
<gene>
    <name type="primary">vibB</name>
    <name type="ordered locus">VC0395_A0300</name>
    <name type="ordered locus">VC395_0788</name>
</gene>
<feature type="chain" id="PRO_0000321856" description="Vibriobactin-specific isochorismatase">
    <location>
        <begin position="1"/>
        <end position="293"/>
    </location>
</feature>
<feature type="domain" description="Carrier" evidence="2">
    <location>
        <begin position="211"/>
        <end position="287"/>
    </location>
</feature>
<feature type="modified residue" description="O-(pantetheine 4'-phosphoryl)serine" evidence="2">
    <location>
        <position position="248"/>
    </location>
</feature>
<evidence type="ECO:0000250" key="1"/>
<evidence type="ECO:0000255" key="2">
    <source>
        <dbReference type="PROSITE-ProRule" id="PRU00258"/>
    </source>
</evidence>
<evidence type="ECO:0000305" key="3"/>